<sequence length="398" mass="44002">MNWHLPLFLLASVTLPSICSHFNPLSLEELGSNTGIQVFNQIVKSRPHDNIVISPHGIASVLGMLQLGADGRTKKQLAMVMRYGVNGVGKILKKINKAIVSKKNKDIVTVANAVFVKNASEIEVPFVTRNKDVFQCEVRNVNFEDPASACDSINAWVKNETRDMIDNLLSPDLIDGVLTRLVLVNAVYFKGLWKSRFQPENTKKRTFVAADGKSYQVPMLAQLSVFRCGSTSAPNDLWYNFIELPYHGESISMLIALPTESSTPLSAIIPHISTKTIDSWMSIMVPKRVQVILPKFTAVAQTDLKEPLKVLGITDMFDSSKANFAKITTGSENLHVSHILQKAKIEVSEDGTKASAATTAILIARSSPPWFIVDRPFLFFIRHNPTGAVLFMGQINKP</sequence>
<reference key="1">
    <citation type="journal article" date="1987" name="Biochemistry">
        <title>cDNA sequence coding for a rat glia-derived nexin and its homology to members of the serpin superfamily.</title>
        <authorList>
            <person name="Sommer J."/>
            <person name="Gloor S.M."/>
            <person name="Rovelli G.F."/>
            <person name="Hofsteenge J."/>
            <person name="Nick H."/>
            <person name="Meier R."/>
            <person name="Monard D."/>
        </authorList>
    </citation>
    <scope>NUCLEOTIDE SEQUENCE [MRNA] (ISOFORM 2)</scope>
</reference>
<reference key="2">
    <citation type="journal article" date="1986" name="Cell">
        <title>A glia-derived neurite promoting factor with protease inhibitory activity belongs to the protease nexins.</title>
        <authorList>
            <person name="Gloor S.M."/>
            <person name="Odink K."/>
            <person name="Guenther J."/>
            <person name="Nick H."/>
            <person name="Monard D."/>
        </authorList>
    </citation>
    <scope>NUCLEOTIDE SEQUENCE [MRNA]</scope>
</reference>
<reference key="3">
    <citation type="journal article" date="1988" name="Biotechnology (N.Y.)">
        <title>Molecular cloning and expression of two forms of human protease nexin I.</title>
        <authorList>
            <person name="McGrogan M."/>
            <person name="Kennedy J."/>
            <person name="Li M.P."/>
            <person name="Hsu C."/>
            <person name="Scott R.W."/>
            <person name="Simonsen C.C."/>
            <person name="Baker J.B."/>
        </authorList>
    </citation>
    <scope>NUCLEOTIDE SEQUENCE [MRNA]</scope>
</reference>
<reference key="4">
    <citation type="journal article" date="2004" name="Nat. Genet.">
        <title>Complete sequencing and characterization of 21,243 full-length human cDNAs.</title>
        <authorList>
            <person name="Ota T."/>
            <person name="Suzuki Y."/>
            <person name="Nishikawa T."/>
            <person name="Otsuki T."/>
            <person name="Sugiyama T."/>
            <person name="Irie R."/>
            <person name="Wakamatsu A."/>
            <person name="Hayashi K."/>
            <person name="Sato H."/>
            <person name="Nagai K."/>
            <person name="Kimura K."/>
            <person name="Makita H."/>
            <person name="Sekine M."/>
            <person name="Obayashi M."/>
            <person name="Nishi T."/>
            <person name="Shibahara T."/>
            <person name="Tanaka T."/>
            <person name="Ishii S."/>
            <person name="Yamamoto J."/>
            <person name="Saito K."/>
            <person name="Kawai Y."/>
            <person name="Isono Y."/>
            <person name="Nakamura Y."/>
            <person name="Nagahari K."/>
            <person name="Murakami K."/>
            <person name="Yasuda T."/>
            <person name="Iwayanagi T."/>
            <person name="Wagatsuma M."/>
            <person name="Shiratori A."/>
            <person name="Sudo H."/>
            <person name="Hosoiri T."/>
            <person name="Kaku Y."/>
            <person name="Kodaira H."/>
            <person name="Kondo H."/>
            <person name="Sugawara M."/>
            <person name="Takahashi M."/>
            <person name="Kanda K."/>
            <person name="Yokoi T."/>
            <person name="Furuya T."/>
            <person name="Kikkawa E."/>
            <person name="Omura Y."/>
            <person name="Abe K."/>
            <person name="Kamihara K."/>
            <person name="Katsuta N."/>
            <person name="Sato K."/>
            <person name="Tanikawa M."/>
            <person name="Yamazaki M."/>
            <person name="Ninomiya K."/>
            <person name="Ishibashi T."/>
            <person name="Yamashita H."/>
            <person name="Murakawa K."/>
            <person name="Fujimori K."/>
            <person name="Tanai H."/>
            <person name="Kimata M."/>
            <person name="Watanabe M."/>
            <person name="Hiraoka S."/>
            <person name="Chiba Y."/>
            <person name="Ishida S."/>
            <person name="Ono Y."/>
            <person name="Takiguchi S."/>
            <person name="Watanabe S."/>
            <person name="Yosida M."/>
            <person name="Hotuta T."/>
            <person name="Kusano J."/>
            <person name="Kanehori K."/>
            <person name="Takahashi-Fujii A."/>
            <person name="Hara H."/>
            <person name="Tanase T.-O."/>
            <person name="Nomura Y."/>
            <person name="Togiya S."/>
            <person name="Komai F."/>
            <person name="Hara R."/>
            <person name="Takeuchi K."/>
            <person name="Arita M."/>
            <person name="Imose N."/>
            <person name="Musashino K."/>
            <person name="Yuuki H."/>
            <person name="Oshima A."/>
            <person name="Sasaki N."/>
            <person name="Aotsuka S."/>
            <person name="Yoshikawa Y."/>
            <person name="Matsunawa H."/>
            <person name="Ichihara T."/>
            <person name="Shiohata N."/>
            <person name="Sano S."/>
            <person name="Moriya S."/>
            <person name="Momiyama H."/>
            <person name="Satoh N."/>
            <person name="Takami S."/>
            <person name="Terashima Y."/>
            <person name="Suzuki O."/>
            <person name="Nakagawa S."/>
            <person name="Senoh A."/>
            <person name="Mizoguchi H."/>
            <person name="Goto Y."/>
            <person name="Shimizu F."/>
            <person name="Wakebe H."/>
            <person name="Hishigaki H."/>
            <person name="Watanabe T."/>
            <person name="Sugiyama A."/>
            <person name="Takemoto M."/>
            <person name="Kawakami B."/>
            <person name="Yamazaki M."/>
            <person name="Watanabe K."/>
            <person name="Kumagai A."/>
            <person name="Itakura S."/>
            <person name="Fukuzumi Y."/>
            <person name="Fujimori Y."/>
            <person name="Komiyama M."/>
            <person name="Tashiro H."/>
            <person name="Tanigami A."/>
            <person name="Fujiwara T."/>
            <person name="Ono T."/>
            <person name="Yamada K."/>
            <person name="Fujii Y."/>
            <person name="Ozaki K."/>
            <person name="Hirao M."/>
            <person name="Ohmori Y."/>
            <person name="Kawabata A."/>
            <person name="Hikiji T."/>
            <person name="Kobatake N."/>
            <person name="Inagaki H."/>
            <person name="Ikema Y."/>
            <person name="Okamoto S."/>
            <person name="Okitani R."/>
            <person name="Kawakami T."/>
            <person name="Noguchi S."/>
            <person name="Itoh T."/>
            <person name="Shigeta K."/>
            <person name="Senba T."/>
            <person name="Matsumura K."/>
            <person name="Nakajima Y."/>
            <person name="Mizuno T."/>
            <person name="Morinaga M."/>
            <person name="Sasaki M."/>
            <person name="Togashi T."/>
            <person name="Oyama M."/>
            <person name="Hata H."/>
            <person name="Watanabe M."/>
            <person name="Komatsu T."/>
            <person name="Mizushima-Sugano J."/>
            <person name="Satoh T."/>
            <person name="Shirai Y."/>
            <person name="Takahashi Y."/>
            <person name="Nakagawa K."/>
            <person name="Okumura K."/>
            <person name="Nagase T."/>
            <person name="Nomura N."/>
            <person name="Kikuchi H."/>
            <person name="Masuho Y."/>
            <person name="Yamashita R."/>
            <person name="Nakai K."/>
            <person name="Yada T."/>
            <person name="Nakamura Y."/>
            <person name="Ohara O."/>
            <person name="Isogai T."/>
            <person name="Sugano S."/>
        </authorList>
    </citation>
    <scope>NUCLEOTIDE SEQUENCE [LARGE SCALE MRNA] (ISOFORMS 1 AND 3)</scope>
    <source>
        <tissue>Hippocampus</tissue>
        <tissue>Thalamus</tissue>
    </source>
</reference>
<reference key="5">
    <citation type="journal article" date="2005" name="Nature">
        <title>Generation and annotation of the DNA sequences of human chromosomes 2 and 4.</title>
        <authorList>
            <person name="Hillier L.W."/>
            <person name="Graves T.A."/>
            <person name="Fulton R.S."/>
            <person name="Fulton L.A."/>
            <person name="Pepin K.H."/>
            <person name="Minx P."/>
            <person name="Wagner-McPherson C."/>
            <person name="Layman D."/>
            <person name="Wylie K."/>
            <person name="Sekhon M."/>
            <person name="Becker M.C."/>
            <person name="Fewell G.A."/>
            <person name="Delehaunty K.D."/>
            <person name="Miner T.L."/>
            <person name="Nash W.E."/>
            <person name="Kremitzki C."/>
            <person name="Oddy L."/>
            <person name="Du H."/>
            <person name="Sun H."/>
            <person name="Bradshaw-Cordum H."/>
            <person name="Ali J."/>
            <person name="Carter J."/>
            <person name="Cordes M."/>
            <person name="Harris A."/>
            <person name="Isak A."/>
            <person name="van Brunt A."/>
            <person name="Nguyen C."/>
            <person name="Du F."/>
            <person name="Courtney L."/>
            <person name="Kalicki J."/>
            <person name="Ozersky P."/>
            <person name="Abbott S."/>
            <person name="Armstrong J."/>
            <person name="Belter E.A."/>
            <person name="Caruso L."/>
            <person name="Cedroni M."/>
            <person name="Cotton M."/>
            <person name="Davidson T."/>
            <person name="Desai A."/>
            <person name="Elliott G."/>
            <person name="Erb T."/>
            <person name="Fronick C."/>
            <person name="Gaige T."/>
            <person name="Haakenson W."/>
            <person name="Haglund K."/>
            <person name="Holmes A."/>
            <person name="Harkins R."/>
            <person name="Kim K."/>
            <person name="Kruchowski S.S."/>
            <person name="Strong C.M."/>
            <person name="Grewal N."/>
            <person name="Goyea E."/>
            <person name="Hou S."/>
            <person name="Levy A."/>
            <person name="Martinka S."/>
            <person name="Mead K."/>
            <person name="McLellan M.D."/>
            <person name="Meyer R."/>
            <person name="Randall-Maher J."/>
            <person name="Tomlinson C."/>
            <person name="Dauphin-Kohlberg S."/>
            <person name="Kozlowicz-Reilly A."/>
            <person name="Shah N."/>
            <person name="Swearengen-Shahid S."/>
            <person name="Snider J."/>
            <person name="Strong J.T."/>
            <person name="Thompson J."/>
            <person name="Yoakum M."/>
            <person name="Leonard S."/>
            <person name="Pearman C."/>
            <person name="Trani L."/>
            <person name="Radionenko M."/>
            <person name="Waligorski J.E."/>
            <person name="Wang C."/>
            <person name="Rock S.M."/>
            <person name="Tin-Wollam A.-M."/>
            <person name="Maupin R."/>
            <person name="Latreille P."/>
            <person name="Wendl M.C."/>
            <person name="Yang S.-P."/>
            <person name="Pohl C."/>
            <person name="Wallis J.W."/>
            <person name="Spieth J."/>
            <person name="Bieri T.A."/>
            <person name="Berkowicz N."/>
            <person name="Nelson J.O."/>
            <person name="Osborne J."/>
            <person name="Ding L."/>
            <person name="Meyer R."/>
            <person name="Sabo A."/>
            <person name="Shotland Y."/>
            <person name="Sinha P."/>
            <person name="Wohldmann P.E."/>
            <person name="Cook L.L."/>
            <person name="Hickenbotham M.T."/>
            <person name="Eldred J."/>
            <person name="Williams D."/>
            <person name="Jones T.A."/>
            <person name="She X."/>
            <person name="Ciccarelli F.D."/>
            <person name="Izaurralde E."/>
            <person name="Taylor J."/>
            <person name="Schmutz J."/>
            <person name="Myers R.M."/>
            <person name="Cox D.R."/>
            <person name="Huang X."/>
            <person name="McPherson J.D."/>
            <person name="Mardis E.R."/>
            <person name="Clifton S.W."/>
            <person name="Warren W.C."/>
            <person name="Chinwalla A.T."/>
            <person name="Eddy S.R."/>
            <person name="Marra M.A."/>
            <person name="Ovcharenko I."/>
            <person name="Furey T.S."/>
            <person name="Miller W."/>
            <person name="Eichler E.E."/>
            <person name="Bork P."/>
            <person name="Suyama M."/>
            <person name="Torrents D."/>
            <person name="Waterston R.H."/>
            <person name="Wilson R.K."/>
        </authorList>
    </citation>
    <scope>NUCLEOTIDE SEQUENCE [LARGE SCALE GENOMIC DNA]</scope>
</reference>
<reference key="6">
    <citation type="submission" date="2005-07" db="EMBL/GenBank/DDBJ databases">
        <authorList>
            <person name="Mural R.J."/>
            <person name="Istrail S."/>
            <person name="Sutton G.G."/>
            <person name="Florea L."/>
            <person name="Halpern A.L."/>
            <person name="Mobarry C.M."/>
            <person name="Lippert R."/>
            <person name="Walenz B."/>
            <person name="Shatkay H."/>
            <person name="Dew I."/>
            <person name="Miller J.R."/>
            <person name="Flanigan M.J."/>
            <person name="Edwards N.J."/>
            <person name="Bolanos R."/>
            <person name="Fasulo D."/>
            <person name="Halldorsson B.V."/>
            <person name="Hannenhalli S."/>
            <person name="Turner R."/>
            <person name="Yooseph S."/>
            <person name="Lu F."/>
            <person name="Nusskern D.R."/>
            <person name="Shue B.C."/>
            <person name="Zheng X.H."/>
            <person name="Zhong F."/>
            <person name="Delcher A.L."/>
            <person name="Huson D.H."/>
            <person name="Kravitz S.A."/>
            <person name="Mouchard L."/>
            <person name="Reinert K."/>
            <person name="Remington K.A."/>
            <person name="Clark A.G."/>
            <person name="Waterman M.S."/>
            <person name="Eichler E.E."/>
            <person name="Adams M.D."/>
            <person name="Hunkapiller M.W."/>
            <person name="Myers E.W."/>
            <person name="Venter J.C."/>
        </authorList>
    </citation>
    <scope>NUCLEOTIDE SEQUENCE [LARGE SCALE GENOMIC DNA]</scope>
</reference>
<reference key="7">
    <citation type="journal article" date="2004" name="Genome Res.">
        <title>The status, quality, and expansion of the NIH full-length cDNA project: the Mammalian Gene Collection (MGC).</title>
        <authorList>
            <consortium name="The MGC Project Team"/>
        </authorList>
    </citation>
    <scope>NUCLEOTIDE SEQUENCE [LARGE SCALE MRNA] (ISOFORMS 1 AND 2)</scope>
    <source>
        <tissue>Skin</tissue>
        <tissue>Testis</tissue>
    </source>
</reference>
<reference key="8">
    <citation type="journal article" date="1985" name="J. Biol. Chem.">
        <title>Protease nexin. Properties and a modified purification procedure.</title>
        <authorList>
            <person name="Scott R.W."/>
            <person name="Bergman B.L."/>
            <person name="Bajpai A."/>
            <person name="Hersh R.T."/>
            <person name="Rodriguez H."/>
            <person name="Jones B.N."/>
            <person name="Barreda C."/>
            <person name="Watts S."/>
            <person name="Baker J.B."/>
        </authorList>
    </citation>
    <scope>PROTEIN SEQUENCE OF 20-47</scope>
    <scope>CHARACTERIZATION</scope>
</reference>
<reference key="9">
    <citation type="journal article" date="2004" name="Protein Sci.">
        <title>Signal peptide prediction based on analysis of experimentally verified cleavage sites.</title>
        <authorList>
            <person name="Zhang Z."/>
            <person name="Henzel W.J."/>
        </authorList>
    </citation>
    <scope>PROTEIN SEQUENCE OF 20-34</scope>
</reference>
<reference key="10">
    <citation type="journal article" date="2006" name="Science">
        <title>The consensus coding sequences of human breast and colorectal cancers.</title>
        <authorList>
            <person name="Sjoeblom T."/>
            <person name="Jones S."/>
            <person name="Wood L.D."/>
            <person name="Parsons D.W."/>
            <person name="Lin J."/>
            <person name="Barber T.D."/>
            <person name="Mandelker D."/>
            <person name="Leary R.J."/>
            <person name="Ptak J."/>
            <person name="Silliman N."/>
            <person name="Szabo S."/>
            <person name="Buckhaults P."/>
            <person name="Farrell C."/>
            <person name="Meeh P."/>
            <person name="Markowitz S.D."/>
            <person name="Willis J."/>
            <person name="Dawson D."/>
            <person name="Willson J.K.V."/>
            <person name="Gazdar A.F."/>
            <person name="Hartigan J."/>
            <person name="Wu L."/>
            <person name="Liu C."/>
            <person name="Parmigiani G."/>
            <person name="Park B.H."/>
            <person name="Bachman K.E."/>
            <person name="Papadopoulos N."/>
            <person name="Vogelstein B."/>
            <person name="Kinzler K.W."/>
            <person name="Velculescu V.E."/>
        </authorList>
    </citation>
    <scope>VARIANT [LARGE SCALE ANALYSIS] ASN-204</scope>
</reference>
<accession>P07093</accession>
<accession>B2R6A4</accession>
<accession>B4DIF2</accession>
<accession>Q53S15</accession>
<accession>Q5D0C4</accession>
<keyword id="KW-0002">3D-structure</keyword>
<keyword id="KW-0025">Alternative splicing</keyword>
<keyword id="KW-0217">Developmental protein</keyword>
<keyword id="KW-0221">Differentiation</keyword>
<keyword id="KW-0903">Direct protein sequencing</keyword>
<keyword id="KW-0325">Glycoprotein</keyword>
<keyword id="KW-0358">Heparin-binding</keyword>
<keyword id="KW-0524">Neurogenesis</keyword>
<keyword id="KW-0646">Protease inhibitor</keyword>
<keyword id="KW-1267">Proteomics identification</keyword>
<keyword id="KW-1185">Reference proteome</keyword>
<keyword id="KW-0964">Secreted</keyword>
<keyword id="KW-0722">Serine protease inhibitor</keyword>
<keyword id="KW-0732">Signal</keyword>
<gene>
    <name type="primary">SERPINE2</name>
    <name type="synonym">PI7</name>
    <name type="synonym">PN1</name>
</gene>
<protein>
    <recommendedName>
        <fullName>Glia-derived nexin</fullName>
        <shortName>GDN</shortName>
    </recommendedName>
    <alternativeName>
        <fullName>Peptidase inhibitor 7</fullName>
        <shortName>PI-7</shortName>
    </alternativeName>
    <alternativeName>
        <fullName>Protease nexin 1</fullName>
        <shortName>PN-1</shortName>
    </alternativeName>
    <alternativeName>
        <fullName>Protease nexin I</fullName>
    </alternativeName>
    <alternativeName>
        <fullName>Serpin E2</fullName>
    </alternativeName>
</protein>
<organism>
    <name type="scientific">Homo sapiens</name>
    <name type="common">Human</name>
    <dbReference type="NCBI Taxonomy" id="9606"/>
    <lineage>
        <taxon>Eukaryota</taxon>
        <taxon>Metazoa</taxon>
        <taxon>Chordata</taxon>
        <taxon>Craniata</taxon>
        <taxon>Vertebrata</taxon>
        <taxon>Euteleostomi</taxon>
        <taxon>Mammalia</taxon>
        <taxon>Eutheria</taxon>
        <taxon>Euarchontoglires</taxon>
        <taxon>Primates</taxon>
        <taxon>Haplorrhini</taxon>
        <taxon>Catarrhini</taxon>
        <taxon>Hominidae</taxon>
        <taxon>Homo</taxon>
    </lineage>
</organism>
<evidence type="ECO:0000255" key="1"/>
<evidence type="ECO:0000269" key="2">
    <source>
    </source>
</evidence>
<evidence type="ECO:0000269" key="3">
    <source>
    </source>
</evidence>
<evidence type="ECO:0000269" key="4">
    <source>
    </source>
</evidence>
<evidence type="ECO:0000303" key="5">
    <source>
    </source>
</evidence>
<evidence type="ECO:0000303" key="6">
    <source>
    </source>
</evidence>
<evidence type="ECO:0000303" key="7">
    <source>
    </source>
</evidence>
<evidence type="ECO:0000305" key="8"/>
<evidence type="ECO:0007829" key="9">
    <source>
        <dbReference type="PDB" id="4DY0"/>
    </source>
</evidence>
<evidence type="ECO:0007829" key="10">
    <source>
        <dbReference type="PDB" id="4DY7"/>
    </source>
</evidence>
<feature type="signal peptide" evidence="2 4">
    <location>
        <begin position="1"/>
        <end position="19"/>
    </location>
</feature>
<feature type="chain" id="PRO_0000032504" description="Glia-derived nexin">
    <location>
        <begin position="20"/>
        <end position="398"/>
    </location>
</feature>
<feature type="site" description="Reactive bond" evidence="1">
    <location>
        <begin position="365"/>
        <end position="366"/>
    </location>
</feature>
<feature type="glycosylation site" description="N-linked (GlcNAc...) asparagine" evidence="1">
    <location>
        <position position="118"/>
    </location>
</feature>
<feature type="glycosylation site" description="N-linked (GlcNAc...) asparagine" evidence="1">
    <location>
        <position position="159"/>
    </location>
</feature>
<feature type="splice variant" id="VSP_043668" description="In isoform 3." evidence="5">
    <original>M</original>
    <variation>MSDCRSSLVEGTM</variation>
    <location>
        <position position="1"/>
    </location>
</feature>
<feature type="splice variant" id="VSP_038367" description="In isoform 2 and isoform 3." evidence="5 6 7">
    <original>TG</original>
    <variation>R</variation>
    <location>
        <begin position="329"/>
        <end position="330"/>
    </location>
</feature>
<feature type="sequence variant" id="VAR_051955" description="In dbSNP:rs3795875.">
    <original>I</original>
    <variation>M</variation>
    <location>
        <position position="51"/>
    </location>
</feature>
<feature type="sequence variant" id="VAR_036027" description="In a breast cancer sample; somatic mutation." evidence="3">
    <original>K</original>
    <variation>N</variation>
    <location>
        <position position="204"/>
    </location>
</feature>
<feature type="sequence conflict" description="In Ref. 4; BAG35401." evidence="8" ref="4">
    <original>N</original>
    <variation>D</variation>
    <location>
        <position position="159"/>
    </location>
</feature>
<feature type="sequence conflict" description="In Ref. 2." evidence="8" ref="2">
    <original>S</original>
    <variation>E</variation>
    <location>
        <position position="261"/>
    </location>
</feature>
<feature type="helix" evidence="9">
    <location>
        <begin position="24"/>
        <end position="45"/>
    </location>
</feature>
<feature type="strand" evidence="9">
    <location>
        <begin position="51"/>
        <end position="53"/>
    </location>
</feature>
<feature type="helix" evidence="9">
    <location>
        <begin position="55"/>
        <end position="66"/>
    </location>
</feature>
<feature type="helix" evidence="9">
    <location>
        <begin position="71"/>
        <end position="81"/>
    </location>
</feature>
<feature type="turn" evidence="9">
    <location>
        <begin position="86"/>
        <end position="88"/>
    </location>
</feature>
<feature type="helix" evidence="9">
    <location>
        <begin position="89"/>
        <end position="100"/>
    </location>
</feature>
<feature type="helix" evidence="9">
    <location>
        <begin position="102"/>
        <end position="104"/>
    </location>
</feature>
<feature type="strand" evidence="9">
    <location>
        <begin position="109"/>
        <end position="117"/>
    </location>
</feature>
<feature type="helix" evidence="9">
    <location>
        <begin position="124"/>
        <end position="134"/>
    </location>
</feature>
<feature type="strand" evidence="9">
    <location>
        <begin position="136"/>
        <end position="140"/>
    </location>
</feature>
<feature type="helix" evidence="9">
    <location>
        <begin position="146"/>
        <end position="160"/>
    </location>
</feature>
<feature type="turn" evidence="9">
    <location>
        <begin position="161"/>
        <end position="163"/>
    </location>
</feature>
<feature type="helix" evidence="9">
    <location>
        <begin position="171"/>
        <end position="173"/>
    </location>
</feature>
<feature type="turn" evidence="9">
    <location>
        <begin position="176"/>
        <end position="178"/>
    </location>
</feature>
<feature type="strand" evidence="9">
    <location>
        <begin position="181"/>
        <end position="189"/>
    </location>
</feature>
<feature type="strand" evidence="9">
    <location>
        <begin position="193"/>
        <end position="195"/>
    </location>
</feature>
<feature type="helix" evidence="9">
    <location>
        <begin position="199"/>
        <end position="201"/>
    </location>
</feature>
<feature type="strand" evidence="9">
    <location>
        <begin position="203"/>
        <end position="208"/>
    </location>
</feature>
<feature type="strand" evidence="10">
    <location>
        <begin position="210"/>
        <end position="212"/>
    </location>
</feature>
<feature type="strand" evidence="9">
    <location>
        <begin position="214"/>
        <end position="232"/>
    </location>
</feature>
<feature type="strand" evidence="9">
    <location>
        <begin position="238"/>
        <end position="246"/>
    </location>
</feature>
<feature type="strand" evidence="9">
    <location>
        <begin position="249"/>
        <end position="260"/>
    </location>
</feature>
<feature type="helix" evidence="9">
    <location>
        <begin position="265"/>
        <end position="267"/>
    </location>
</feature>
<feature type="helix" evidence="10">
    <location>
        <begin position="269"/>
        <end position="271"/>
    </location>
</feature>
<feature type="helix" evidence="9">
    <location>
        <begin position="274"/>
        <end position="281"/>
    </location>
</feature>
<feature type="strand" evidence="9">
    <location>
        <begin position="285"/>
        <end position="294"/>
    </location>
</feature>
<feature type="strand" evidence="9">
    <location>
        <begin position="296"/>
        <end position="303"/>
    </location>
</feature>
<feature type="helix" evidence="9">
    <location>
        <begin position="305"/>
        <end position="310"/>
    </location>
</feature>
<feature type="helix" evidence="9">
    <location>
        <begin position="315"/>
        <end position="317"/>
    </location>
</feature>
<feature type="turn" evidence="9">
    <location>
        <begin position="319"/>
        <end position="321"/>
    </location>
</feature>
<feature type="turn" evidence="9">
    <location>
        <begin position="325"/>
        <end position="327"/>
    </location>
</feature>
<feature type="strand" evidence="10">
    <location>
        <begin position="328"/>
        <end position="330"/>
    </location>
</feature>
<feature type="strand" evidence="9">
    <location>
        <begin position="338"/>
        <end position="347"/>
    </location>
</feature>
<feature type="strand" evidence="10">
    <location>
        <begin position="354"/>
        <end position="356"/>
    </location>
</feature>
<feature type="helix" evidence="10">
    <location>
        <begin position="357"/>
        <end position="360"/>
    </location>
</feature>
<feature type="strand" evidence="9">
    <location>
        <begin position="370"/>
        <end position="372"/>
    </location>
</feature>
<feature type="strand" evidence="9">
    <location>
        <begin position="377"/>
        <end position="383"/>
    </location>
</feature>
<feature type="turn" evidence="9">
    <location>
        <begin position="384"/>
        <end position="387"/>
    </location>
</feature>
<feature type="strand" evidence="9">
    <location>
        <begin position="388"/>
        <end position="396"/>
    </location>
</feature>
<proteinExistence type="evidence at protein level"/>
<comment type="function">
    <text>Serine protease inhibitor with activity toward thrombin, trypsin, and urokinase. Promotes neurite extension by inhibiting thrombin. Binds heparin.</text>
</comment>
<comment type="interaction">
    <interactant intactId="EBI-10195168">
        <id>P07093</id>
    </interactant>
    <interactant intactId="EBI-10175124">
        <id>Q8IZU0</id>
        <label>FAM9B</label>
    </interactant>
    <organismsDiffer>false</organismsDiffer>
    <experiments>3</experiments>
</comment>
<comment type="subcellular location">
    <subcellularLocation>
        <location>Secreted</location>
        <location>Extracellular space</location>
    </subcellularLocation>
</comment>
<comment type="alternative products">
    <event type="alternative splicing"/>
    <isoform>
        <id>P07093-1</id>
        <name>1</name>
        <sequence type="displayed"/>
    </isoform>
    <isoform>
        <id>P07093-2</id>
        <name>2</name>
        <sequence type="described" ref="VSP_038367"/>
    </isoform>
    <isoform>
        <id>P07093-3</id>
        <name>3</name>
        <sequence type="described" ref="VSP_043668 VSP_038367"/>
    </isoform>
</comment>
<comment type="similarity">
    <text evidence="8">Belongs to the serpin family.</text>
</comment>
<dbReference type="EMBL" id="M17783">
    <property type="protein sequence ID" value="AAA35883.1"/>
    <property type="molecule type" value="mRNA"/>
</dbReference>
<dbReference type="EMBL" id="AK295564">
    <property type="protein sequence ID" value="BAG58464.1"/>
    <property type="molecule type" value="mRNA"/>
</dbReference>
<dbReference type="EMBL" id="AK312499">
    <property type="protein sequence ID" value="BAG35401.1"/>
    <property type="molecule type" value="mRNA"/>
</dbReference>
<dbReference type="EMBL" id="AC073641">
    <property type="protein sequence ID" value="AAY14926.1"/>
    <property type="molecule type" value="Genomic_DNA"/>
</dbReference>
<dbReference type="EMBL" id="CH471063">
    <property type="protein sequence ID" value="EAW70821.1"/>
    <property type="molecule type" value="Genomic_DNA"/>
</dbReference>
<dbReference type="EMBL" id="CH471063">
    <property type="protein sequence ID" value="EAW70823.1"/>
    <property type="molecule type" value="Genomic_DNA"/>
</dbReference>
<dbReference type="EMBL" id="BC015663">
    <property type="protein sequence ID" value="AAH15663.1"/>
    <property type="molecule type" value="mRNA"/>
</dbReference>
<dbReference type="EMBL" id="BC042628">
    <property type="protein sequence ID" value="AAH42628.1"/>
    <property type="molecule type" value="mRNA"/>
</dbReference>
<dbReference type="CCDS" id="CCDS2460.1">
    <molecule id="P07093-1"/>
</dbReference>
<dbReference type="CCDS" id="CCDS46525.1">
    <molecule id="P07093-3"/>
</dbReference>
<dbReference type="CCDS" id="CCDS46526.1">
    <molecule id="P07093-2"/>
</dbReference>
<dbReference type="PIR" id="A37274">
    <property type="entry name" value="A37274"/>
</dbReference>
<dbReference type="RefSeq" id="NP_001130000.1">
    <molecule id="P07093-2"/>
    <property type="nucleotide sequence ID" value="NM_001136528.2"/>
</dbReference>
<dbReference type="RefSeq" id="NP_001130002.1">
    <molecule id="P07093-3"/>
    <property type="nucleotide sequence ID" value="NM_001136530.1"/>
</dbReference>
<dbReference type="RefSeq" id="NP_006207.1">
    <molecule id="P07093-1"/>
    <property type="nucleotide sequence ID" value="NM_006216.4"/>
</dbReference>
<dbReference type="RefSeq" id="XP_016859818.1">
    <property type="nucleotide sequence ID" value="XM_017004329.1"/>
</dbReference>
<dbReference type="RefSeq" id="XP_016859819.1">
    <molecule id="P07093-1"/>
    <property type="nucleotide sequence ID" value="XM_017004330.2"/>
</dbReference>
<dbReference type="RefSeq" id="XP_016859820.1">
    <property type="nucleotide sequence ID" value="XM_017004331.1"/>
</dbReference>
<dbReference type="RefSeq" id="XP_016859821.1">
    <molecule id="P07093-2"/>
    <property type="nucleotide sequence ID" value="XM_017004332.3"/>
</dbReference>
<dbReference type="RefSeq" id="XP_054198539.1">
    <molecule id="P07093-1"/>
    <property type="nucleotide sequence ID" value="XM_054342564.1"/>
</dbReference>
<dbReference type="RefSeq" id="XP_054198540.1">
    <molecule id="P07093-2"/>
    <property type="nucleotide sequence ID" value="XM_054342565.1"/>
</dbReference>
<dbReference type="PDB" id="4DY0">
    <property type="method" value="X-ray"/>
    <property type="resolution" value="2.35 A"/>
    <property type="chains" value="A/B=20-398"/>
</dbReference>
<dbReference type="PDB" id="4DY7">
    <property type="method" value="X-ray"/>
    <property type="resolution" value="2.80 A"/>
    <property type="chains" value="C/F=20-398"/>
</dbReference>
<dbReference type="PDBsum" id="4DY0"/>
<dbReference type="PDBsum" id="4DY7"/>
<dbReference type="SMR" id="P07093"/>
<dbReference type="BioGRID" id="111288">
    <property type="interactions" value="58"/>
</dbReference>
<dbReference type="FunCoup" id="P07093">
    <property type="interactions" value="191"/>
</dbReference>
<dbReference type="IntAct" id="P07093">
    <property type="interactions" value="39"/>
</dbReference>
<dbReference type="MINT" id="P07093"/>
<dbReference type="STRING" id="9606.ENSP00000415786"/>
<dbReference type="MEROPS" id="I04.021"/>
<dbReference type="CarbonylDB" id="P07093"/>
<dbReference type="GlyCosmos" id="P07093">
    <property type="glycosylation" value="3 sites, 1 glycan"/>
</dbReference>
<dbReference type="GlyGen" id="P07093">
    <property type="glycosylation" value="5 sites, 10 N-linked glycans (2 sites), 2 O-linked glycans (2 sites)"/>
</dbReference>
<dbReference type="iPTMnet" id="P07093"/>
<dbReference type="PhosphoSitePlus" id="P07093"/>
<dbReference type="SwissPalm" id="P07093"/>
<dbReference type="BioMuta" id="SERPINE2"/>
<dbReference type="DMDM" id="121110"/>
<dbReference type="jPOST" id="P07093"/>
<dbReference type="MassIVE" id="P07093"/>
<dbReference type="PaxDb" id="9606-ENSP00000415786"/>
<dbReference type="PeptideAtlas" id="P07093"/>
<dbReference type="ProteomicsDB" id="51945">
    <molecule id="P07093-1"/>
</dbReference>
<dbReference type="ProteomicsDB" id="51946">
    <molecule id="P07093-2"/>
</dbReference>
<dbReference type="ProteomicsDB" id="51947">
    <molecule id="P07093-3"/>
</dbReference>
<dbReference type="Pumba" id="P07093"/>
<dbReference type="ABCD" id="P07093">
    <property type="antibodies" value="4 sequenced antibodies"/>
</dbReference>
<dbReference type="Antibodypedia" id="34366">
    <property type="antibodies" value="409 antibodies from 31 providers"/>
</dbReference>
<dbReference type="DNASU" id="5270"/>
<dbReference type="Ensembl" id="ENST00000258405.9">
    <molecule id="P07093-1"/>
    <property type="protein sequence ID" value="ENSP00000258405.4"/>
    <property type="gene ID" value="ENSG00000135919.14"/>
</dbReference>
<dbReference type="Ensembl" id="ENST00000409304.6">
    <molecule id="P07093-2"/>
    <property type="protein sequence ID" value="ENSP00000386412.1"/>
    <property type="gene ID" value="ENSG00000135919.14"/>
</dbReference>
<dbReference type="Ensembl" id="ENST00000409840.7">
    <molecule id="P07093-2"/>
    <property type="protein sequence ID" value="ENSP00000386969.3"/>
    <property type="gene ID" value="ENSG00000135919.14"/>
</dbReference>
<dbReference type="Ensembl" id="ENST00000447280.6">
    <molecule id="P07093-3"/>
    <property type="protein sequence ID" value="ENSP00000415786.2"/>
    <property type="gene ID" value="ENSG00000135919.14"/>
</dbReference>
<dbReference type="GeneID" id="5270"/>
<dbReference type="KEGG" id="hsa:5270"/>
<dbReference type="MANE-Select" id="ENST00000409304.6">
    <molecule id="P07093-2"/>
    <property type="protein sequence ID" value="ENSP00000386412.1"/>
    <property type="RefSeq nucleotide sequence ID" value="NM_001136528.2"/>
    <property type="RefSeq protein sequence ID" value="NP_001130000.1"/>
</dbReference>
<dbReference type="UCSC" id="uc002vnu.3">
    <molecule id="P07093-1"/>
    <property type="organism name" value="human"/>
</dbReference>
<dbReference type="AGR" id="HGNC:8951"/>
<dbReference type="CTD" id="5270"/>
<dbReference type="DisGeNET" id="5270"/>
<dbReference type="GeneCards" id="SERPINE2"/>
<dbReference type="HGNC" id="HGNC:8951">
    <property type="gene designation" value="SERPINE2"/>
</dbReference>
<dbReference type="HPA" id="ENSG00000135919">
    <property type="expression patterns" value="Group enriched (ovary, placenta)"/>
</dbReference>
<dbReference type="MIM" id="177010">
    <property type="type" value="gene"/>
</dbReference>
<dbReference type="neXtProt" id="NX_P07093"/>
<dbReference type="OpenTargets" id="ENSG00000135919"/>
<dbReference type="PharmGKB" id="PA269"/>
<dbReference type="VEuPathDB" id="HostDB:ENSG00000135919"/>
<dbReference type="eggNOG" id="KOG2392">
    <property type="taxonomic scope" value="Eukaryota"/>
</dbReference>
<dbReference type="GeneTree" id="ENSGT00940000158424"/>
<dbReference type="HOGENOM" id="CLU_023330_0_4_1"/>
<dbReference type="InParanoid" id="P07093"/>
<dbReference type="OrthoDB" id="671595at2759"/>
<dbReference type="PAN-GO" id="P07093">
    <property type="GO annotations" value="4 GO annotations based on evolutionary models"/>
</dbReference>
<dbReference type="PhylomeDB" id="P07093"/>
<dbReference type="TreeFam" id="TF352620"/>
<dbReference type="PathwayCommons" id="P07093"/>
<dbReference type="Reactome" id="R-HSA-140837">
    <property type="pathway name" value="Intrinsic Pathway of Fibrin Clot Formation"/>
</dbReference>
<dbReference type="Reactome" id="R-HSA-140875">
    <property type="pathway name" value="Common Pathway of Fibrin Clot Formation"/>
</dbReference>
<dbReference type="Reactome" id="R-HSA-75205">
    <property type="pathway name" value="Dissolution of Fibrin Clot"/>
</dbReference>
<dbReference type="SignaLink" id="P07093"/>
<dbReference type="BioGRID-ORCS" id="5270">
    <property type="hits" value="8 hits in 1159 CRISPR screens"/>
</dbReference>
<dbReference type="ChiTaRS" id="SERPINE2">
    <property type="organism name" value="human"/>
</dbReference>
<dbReference type="EvolutionaryTrace" id="P07093"/>
<dbReference type="GeneWiki" id="SERPINE2"/>
<dbReference type="GenomeRNAi" id="5270"/>
<dbReference type="Pharos" id="P07093">
    <property type="development level" value="Tbio"/>
</dbReference>
<dbReference type="PRO" id="PR:P07093"/>
<dbReference type="Proteomes" id="UP000005640">
    <property type="component" value="Chromosome 2"/>
</dbReference>
<dbReference type="RNAct" id="P07093">
    <property type="molecule type" value="protein"/>
</dbReference>
<dbReference type="Bgee" id="ENSG00000135919">
    <property type="expression patterns" value="Expressed in decidua and 205 other cell types or tissues"/>
</dbReference>
<dbReference type="ExpressionAtlas" id="P07093">
    <property type="expression patterns" value="baseline and differential"/>
</dbReference>
<dbReference type="GO" id="GO:0062023">
    <property type="term" value="C:collagen-containing extracellular matrix"/>
    <property type="evidence" value="ECO:0000314"/>
    <property type="project" value="BHF-UCL"/>
</dbReference>
<dbReference type="GO" id="GO:0005829">
    <property type="term" value="C:cytosol"/>
    <property type="evidence" value="ECO:0000314"/>
    <property type="project" value="BHF-UCL"/>
</dbReference>
<dbReference type="GO" id="GO:0005576">
    <property type="term" value="C:extracellular region"/>
    <property type="evidence" value="ECO:0000314"/>
    <property type="project" value="MGI"/>
</dbReference>
<dbReference type="GO" id="GO:0005615">
    <property type="term" value="C:extracellular space"/>
    <property type="evidence" value="ECO:0000318"/>
    <property type="project" value="GO_Central"/>
</dbReference>
<dbReference type="GO" id="GO:1903561">
    <property type="term" value="C:extracellular vesicle"/>
    <property type="evidence" value="ECO:0007005"/>
    <property type="project" value="UniProtKB"/>
</dbReference>
<dbReference type="GO" id="GO:0031594">
    <property type="term" value="C:neuromuscular junction"/>
    <property type="evidence" value="ECO:0000250"/>
    <property type="project" value="BHF-UCL"/>
</dbReference>
<dbReference type="GO" id="GO:0031091">
    <property type="term" value="C:platelet alpha granule"/>
    <property type="evidence" value="ECO:0000314"/>
    <property type="project" value="MGI"/>
</dbReference>
<dbReference type="GO" id="GO:0005539">
    <property type="term" value="F:glycosaminoglycan binding"/>
    <property type="evidence" value="ECO:0000314"/>
    <property type="project" value="BHF-UCL"/>
</dbReference>
<dbReference type="GO" id="GO:0008201">
    <property type="term" value="F:heparin binding"/>
    <property type="evidence" value="ECO:0000314"/>
    <property type="project" value="BHF-UCL"/>
</dbReference>
<dbReference type="GO" id="GO:0004867">
    <property type="term" value="F:serine-type endopeptidase inhibitor activity"/>
    <property type="evidence" value="ECO:0000314"/>
    <property type="project" value="BHF-UCL"/>
</dbReference>
<dbReference type="GO" id="GO:0005102">
    <property type="term" value="F:signaling receptor binding"/>
    <property type="evidence" value="ECO:0000353"/>
    <property type="project" value="BHF-UCL"/>
</dbReference>
<dbReference type="GO" id="GO:0030154">
    <property type="term" value="P:cell differentiation"/>
    <property type="evidence" value="ECO:0007669"/>
    <property type="project" value="UniProtKB-KW"/>
</dbReference>
<dbReference type="GO" id="GO:0021683">
    <property type="term" value="P:cerebellar granular layer morphogenesis"/>
    <property type="evidence" value="ECO:0007669"/>
    <property type="project" value="Ensembl"/>
</dbReference>
<dbReference type="GO" id="GO:0050974">
    <property type="term" value="P:detection of mechanical stimulus involved in sensory perception"/>
    <property type="evidence" value="ECO:0007669"/>
    <property type="project" value="Ensembl"/>
</dbReference>
<dbReference type="GO" id="GO:0060384">
    <property type="term" value="P:innervation"/>
    <property type="evidence" value="ECO:0007669"/>
    <property type="project" value="Ensembl"/>
</dbReference>
<dbReference type="GO" id="GO:0060291">
    <property type="term" value="P:long-term synaptic potentiation"/>
    <property type="evidence" value="ECO:0007669"/>
    <property type="project" value="Ensembl"/>
</dbReference>
<dbReference type="GO" id="GO:0042628">
    <property type="term" value="P:mating plug formation"/>
    <property type="evidence" value="ECO:0007669"/>
    <property type="project" value="Ensembl"/>
</dbReference>
<dbReference type="GO" id="GO:0030195">
    <property type="term" value="P:negative regulation of blood coagulation"/>
    <property type="evidence" value="ECO:0000314"/>
    <property type="project" value="BHF-UCL"/>
</dbReference>
<dbReference type="GO" id="GO:0030308">
    <property type="term" value="P:negative regulation of cell growth"/>
    <property type="evidence" value="ECO:0007669"/>
    <property type="project" value="Ensembl"/>
</dbReference>
<dbReference type="GO" id="GO:0008285">
    <property type="term" value="P:negative regulation of cell population proliferation"/>
    <property type="evidence" value="ECO:0007669"/>
    <property type="project" value="Ensembl"/>
</dbReference>
<dbReference type="GO" id="GO:0051898">
    <property type="term" value="P:negative regulation of phosphatidylinositol 3-kinase/protein kinase B signal transduction"/>
    <property type="evidence" value="ECO:0007669"/>
    <property type="project" value="Ensembl"/>
</dbReference>
<dbReference type="GO" id="GO:0010757">
    <property type="term" value="P:negative regulation of plasminogen activation"/>
    <property type="evidence" value="ECO:0000315"/>
    <property type="project" value="BHF-UCL"/>
</dbReference>
<dbReference type="GO" id="GO:0090331">
    <property type="term" value="P:negative regulation of platelet aggregation"/>
    <property type="evidence" value="ECO:0000250"/>
    <property type="project" value="BHF-UCL"/>
</dbReference>
<dbReference type="GO" id="GO:0042177">
    <property type="term" value="P:negative regulation of protein catabolic process"/>
    <property type="evidence" value="ECO:0007669"/>
    <property type="project" value="Ensembl"/>
</dbReference>
<dbReference type="GO" id="GO:0010955">
    <property type="term" value="P:negative regulation of protein processing"/>
    <property type="evidence" value="ECO:0000305"/>
    <property type="project" value="BHF-UCL"/>
</dbReference>
<dbReference type="GO" id="GO:0045861">
    <property type="term" value="P:negative regulation of proteolysis"/>
    <property type="evidence" value="ECO:0000314"/>
    <property type="project" value="BHF-UCL"/>
</dbReference>
<dbReference type="GO" id="GO:0045879">
    <property type="term" value="P:negative regulation of smoothened signaling pathway"/>
    <property type="evidence" value="ECO:0007669"/>
    <property type="project" value="Ensembl"/>
</dbReference>
<dbReference type="GO" id="GO:0010766">
    <property type="term" value="P:negative regulation of sodium ion transport"/>
    <property type="evidence" value="ECO:0007669"/>
    <property type="project" value="Ensembl"/>
</dbReference>
<dbReference type="GO" id="GO:0030168">
    <property type="term" value="P:platelet activation"/>
    <property type="evidence" value="ECO:0007669"/>
    <property type="project" value="Ensembl"/>
</dbReference>
<dbReference type="GO" id="GO:0048711">
    <property type="term" value="P:positive regulation of astrocyte differentiation"/>
    <property type="evidence" value="ECO:0000314"/>
    <property type="project" value="BHF-UCL"/>
</dbReference>
<dbReference type="GO" id="GO:0030163">
    <property type="term" value="P:protein catabolic process"/>
    <property type="evidence" value="ECO:0007669"/>
    <property type="project" value="Ensembl"/>
</dbReference>
<dbReference type="GO" id="GO:0030334">
    <property type="term" value="P:regulation of cell migration"/>
    <property type="evidence" value="ECO:0000303"/>
    <property type="project" value="UniProtKB"/>
</dbReference>
<dbReference type="GO" id="GO:0051966">
    <property type="term" value="P:regulation of synaptic transmission, glutamatergic"/>
    <property type="evidence" value="ECO:0007669"/>
    <property type="project" value="Ensembl"/>
</dbReference>
<dbReference type="GO" id="GO:0048505">
    <property type="term" value="P:regulation of timing of cell differentiation"/>
    <property type="evidence" value="ECO:0007669"/>
    <property type="project" value="Ensembl"/>
</dbReference>
<dbReference type="GO" id="GO:0032940">
    <property type="term" value="P:secretion by cell"/>
    <property type="evidence" value="ECO:0007669"/>
    <property type="project" value="Ensembl"/>
</dbReference>
<dbReference type="GO" id="GO:0033363">
    <property type="term" value="P:secretory granule organization"/>
    <property type="evidence" value="ECO:0007669"/>
    <property type="project" value="Ensembl"/>
</dbReference>
<dbReference type="GO" id="GO:0061108">
    <property type="term" value="P:seminal vesicle epithelium development"/>
    <property type="evidence" value="ECO:0007669"/>
    <property type="project" value="Ensembl"/>
</dbReference>
<dbReference type="CDD" id="cd19573">
    <property type="entry name" value="serpinE2_GDN"/>
    <property type="match status" value="1"/>
</dbReference>
<dbReference type="FunFam" id="2.30.39.10:FF:000009">
    <property type="entry name" value="Glia-derived nexin isoform 2"/>
    <property type="match status" value="1"/>
</dbReference>
<dbReference type="FunFam" id="3.30.497.10:FF:000010">
    <property type="entry name" value="glia-derived nexin isoform X1"/>
    <property type="match status" value="1"/>
</dbReference>
<dbReference type="FunFam" id="2.30.39.10:FF:000035">
    <property type="entry name" value="Serine protease inhibitor (serpin) 16"/>
    <property type="match status" value="1"/>
</dbReference>
<dbReference type="FunFam" id="2.10.310.10:FF:000001">
    <property type="entry name" value="Serpin family A member 1"/>
    <property type="match status" value="1"/>
</dbReference>
<dbReference type="Gene3D" id="2.30.39.10">
    <property type="entry name" value="Alpha-1-antitrypsin, domain 1"/>
    <property type="match status" value="1"/>
</dbReference>
<dbReference type="Gene3D" id="3.30.497.10">
    <property type="entry name" value="Antithrombin, subunit I, domain 2"/>
    <property type="match status" value="1"/>
</dbReference>
<dbReference type="Gene3D" id="2.10.310.10">
    <property type="entry name" value="Serpins superfamily"/>
    <property type="match status" value="1"/>
</dbReference>
<dbReference type="InterPro" id="IPR023795">
    <property type="entry name" value="Serpin_CS"/>
</dbReference>
<dbReference type="InterPro" id="IPR023796">
    <property type="entry name" value="Serpin_dom"/>
</dbReference>
<dbReference type="InterPro" id="IPR000215">
    <property type="entry name" value="Serpin_fam"/>
</dbReference>
<dbReference type="InterPro" id="IPR036186">
    <property type="entry name" value="Serpin_sf"/>
</dbReference>
<dbReference type="InterPro" id="IPR042178">
    <property type="entry name" value="Serpin_sf_1"/>
</dbReference>
<dbReference type="InterPro" id="IPR042185">
    <property type="entry name" value="Serpin_sf_2"/>
</dbReference>
<dbReference type="PANTHER" id="PTHR11461:SF48">
    <property type="entry name" value="GLIA-DERIVED NEXIN"/>
    <property type="match status" value="1"/>
</dbReference>
<dbReference type="PANTHER" id="PTHR11461">
    <property type="entry name" value="SERINE PROTEASE INHIBITOR, SERPIN"/>
    <property type="match status" value="1"/>
</dbReference>
<dbReference type="Pfam" id="PF00079">
    <property type="entry name" value="Serpin"/>
    <property type="match status" value="1"/>
</dbReference>
<dbReference type="SMART" id="SM00093">
    <property type="entry name" value="SERPIN"/>
    <property type="match status" value="1"/>
</dbReference>
<dbReference type="SUPFAM" id="SSF56574">
    <property type="entry name" value="Serpins"/>
    <property type="match status" value="1"/>
</dbReference>
<dbReference type="PROSITE" id="PS00284">
    <property type="entry name" value="SERPIN"/>
    <property type="match status" value="1"/>
</dbReference>
<name>GDN_HUMAN</name>